<dbReference type="EC" id="6.1.1.1" evidence="1"/>
<dbReference type="EMBL" id="CP000001">
    <property type="protein sequence ID" value="AAU15863.1"/>
    <property type="molecule type" value="Genomic_DNA"/>
</dbReference>
<dbReference type="SMR" id="Q633D2"/>
<dbReference type="KEGG" id="bcz:BCE33L4407"/>
<dbReference type="PATRIC" id="fig|288681.22.peg.962"/>
<dbReference type="Proteomes" id="UP000002612">
    <property type="component" value="Chromosome"/>
</dbReference>
<dbReference type="GO" id="GO:0005829">
    <property type="term" value="C:cytosol"/>
    <property type="evidence" value="ECO:0007669"/>
    <property type="project" value="TreeGrafter"/>
</dbReference>
<dbReference type="GO" id="GO:0005524">
    <property type="term" value="F:ATP binding"/>
    <property type="evidence" value="ECO:0007669"/>
    <property type="project" value="UniProtKB-UniRule"/>
</dbReference>
<dbReference type="GO" id="GO:0003723">
    <property type="term" value="F:RNA binding"/>
    <property type="evidence" value="ECO:0007669"/>
    <property type="project" value="UniProtKB-KW"/>
</dbReference>
<dbReference type="GO" id="GO:0004831">
    <property type="term" value="F:tyrosine-tRNA ligase activity"/>
    <property type="evidence" value="ECO:0007669"/>
    <property type="project" value="UniProtKB-UniRule"/>
</dbReference>
<dbReference type="GO" id="GO:0006437">
    <property type="term" value="P:tyrosyl-tRNA aminoacylation"/>
    <property type="evidence" value="ECO:0007669"/>
    <property type="project" value="UniProtKB-UniRule"/>
</dbReference>
<dbReference type="CDD" id="cd00165">
    <property type="entry name" value="S4"/>
    <property type="match status" value="1"/>
</dbReference>
<dbReference type="CDD" id="cd00395">
    <property type="entry name" value="Tyr_Trp_RS_core"/>
    <property type="match status" value="1"/>
</dbReference>
<dbReference type="FunFam" id="1.10.240.10:FF:000001">
    <property type="entry name" value="Tyrosine--tRNA ligase"/>
    <property type="match status" value="1"/>
</dbReference>
<dbReference type="FunFam" id="3.10.290.10:FF:000012">
    <property type="entry name" value="Tyrosine--tRNA ligase"/>
    <property type="match status" value="1"/>
</dbReference>
<dbReference type="FunFam" id="3.40.50.620:FF:000008">
    <property type="entry name" value="Tyrosine--tRNA ligase"/>
    <property type="match status" value="1"/>
</dbReference>
<dbReference type="Gene3D" id="3.40.50.620">
    <property type="entry name" value="HUPs"/>
    <property type="match status" value="1"/>
</dbReference>
<dbReference type="Gene3D" id="3.10.290.10">
    <property type="entry name" value="RNA-binding S4 domain"/>
    <property type="match status" value="1"/>
</dbReference>
<dbReference type="Gene3D" id="1.10.240.10">
    <property type="entry name" value="Tyrosyl-Transfer RNA Synthetase"/>
    <property type="match status" value="1"/>
</dbReference>
<dbReference type="HAMAP" id="MF_02006">
    <property type="entry name" value="Tyr_tRNA_synth_type1"/>
    <property type="match status" value="1"/>
</dbReference>
<dbReference type="InterPro" id="IPR001412">
    <property type="entry name" value="aa-tRNA-synth_I_CS"/>
</dbReference>
<dbReference type="InterPro" id="IPR002305">
    <property type="entry name" value="aa-tRNA-synth_Ic"/>
</dbReference>
<dbReference type="InterPro" id="IPR014729">
    <property type="entry name" value="Rossmann-like_a/b/a_fold"/>
</dbReference>
<dbReference type="InterPro" id="IPR002942">
    <property type="entry name" value="S4_RNA-bd"/>
</dbReference>
<dbReference type="InterPro" id="IPR036986">
    <property type="entry name" value="S4_RNA-bd_sf"/>
</dbReference>
<dbReference type="InterPro" id="IPR054608">
    <property type="entry name" value="SYY-like_C"/>
</dbReference>
<dbReference type="InterPro" id="IPR002307">
    <property type="entry name" value="Tyr-tRNA-ligase"/>
</dbReference>
<dbReference type="InterPro" id="IPR024088">
    <property type="entry name" value="Tyr-tRNA-ligase_bac-type"/>
</dbReference>
<dbReference type="InterPro" id="IPR024107">
    <property type="entry name" value="Tyr-tRNA-ligase_bac_1"/>
</dbReference>
<dbReference type="NCBIfam" id="TIGR00234">
    <property type="entry name" value="tyrS"/>
    <property type="match status" value="1"/>
</dbReference>
<dbReference type="PANTHER" id="PTHR11766:SF0">
    <property type="entry name" value="TYROSINE--TRNA LIGASE, MITOCHONDRIAL"/>
    <property type="match status" value="1"/>
</dbReference>
<dbReference type="PANTHER" id="PTHR11766">
    <property type="entry name" value="TYROSYL-TRNA SYNTHETASE"/>
    <property type="match status" value="1"/>
</dbReference>
<dbReference type="Pfam" id="PF22421">
    <property type="entry name" value="SYY_C-terminal"/>
    <property type="match status" value="1"/>
</dbReference>
<dbReference type="Pfam" id="PF00579">
    <property type="entry name" value="tRNA-synt_1b"/>
    <property type="match status" value="1"/>
</dbReference>
<dbReference type="PRINTS" id="PR01040">
    <property type="entry name" value="TRNASYNTHTYR"/>
</dbReference>
<dbReference type="SMART" id="SM00363">
    <property type="entry name" value="S4"/>
    <property type="match status" value="1"/>
</dbReference>
<dbReference type="SUPFAM" id="SSF55174">
    <property type="entry name" value="Alpha-L RNA-binding motif"/>
    <property type="match status" value="1"/>
</dbReference>
<dbReference type="SUPFAM" id="SSF52374">
    <property type="entry name" value="Nucleotidylyl transferase"/>
    <property type="match status" value="1"/>
</dbReference>
<dbReference type="PROSITE" id="PS00178">
    <property type="entry name" value="AA_TRNA_LIGASE_I"/>
    <property type="match status" value="1"/>
</dbReference>
<dbReference type="PROSITE" id="PS50889">
    <property type="entry name" value="S4"/>
    <property type="match status" value="1"/>
</dbReference>
<protein>
    <recommendedName>
        <fullName evidence="1">Tyrosine--tRNA ligase 1</fullName>
        <ecNumber evidence="1">6.1.1.1</ecNumber>
    </recommendedName>
    <alternativeName>
        <fullName evidence="1">Tyrosyl-tRNA synthetase 1</fullName>
        <shortName evidence="1">TyrRS 1</shortName>
    </alternativeName>
</protein>
<accession>Q633D2</accession>
<proteinExistence type="inferred from homology"/>
<organism>
    <name type="scientific">Bacillus cereus (strain ZK / E33L)</name>
    <dbReference type="NCBI Taxonomy" id="288681"/>
    <lineage>
        <taxon>Bacteria</taxon>
        <taxon>Bacillati</taxon>
        <taxon>Bacillota</taxon>
        <taxon>Bacilli</taxon>
        <taxon>Bacillales</taxon>
        <taxon>Bacillaceae</taxon>
        <taxon>Bacillus</taxon>
        <taxon>Bacillus cereus group</taxon>
    </lineage>
</organism>
<keyword id="KW-0030">Aminoacyl-tRNA synthetase</keyword>
<keyword id="KW-0067">ATP-binding</keyword>
<keyword id="KW-0963">Cytoplasm</keyword>
<keyword id="KW-0436">Ligase</keyword>
<keyword id="KW-0547">Nucleotide-binding</keyword>
<keyword id="KW-0648">Protein biosynthesis</keyword>
<keyword id="KW-0694">RNA-binding</keyword>
<evidence type="ECO:0000255" key="1">
    <source>
        <dbReference type="HAMAP-Rule" id="MF_02006"/>
    </source>
</evidence>
<sequence length="418" mass="47035">MGILQDLEFRGLINQQTDAEGLEQLLEKESVKLYCGFDPTADSLHIGHMLPVLMLRRFQLAGHQPIALVGGGTGMIGDPSGKKAERTLNTKDTVAYYTESIKNQLSNFLEFENVENPATMANNYDWLGNLDVISFLRDIGKNFGLNYMLAKDTVASRLETGISFTEFSYMILQSYDFLNLYQHHNCRLQIGGSDQWGNITAGLELIRKSEEDAKAFGLTIPLVTKSDGTKFGKTEGGAIWLDPEKTTPYEFYQFWINTDDRDVVKYLKYFTFLSHEEILELEKQVAEAPEKRAAQKALGAEMTKLVHGEEALEQAIKISAALFSGSVAELTASEIEQGFKDVPSVERTAEDTVLIDLLVESKISPSKRQAREDVTNGAIYVNGERTQALDYVVTEKDRIEGKFTIIRRGKKKYFLIRY</sequence>
<feature type="chain" id="PRO_0000234673" description="Tyrosine--tRNA ligase 1">
    <location>
        <begin position="1"/>
        <end position="418"/>
    </location>
</feature>
<feature type="domain" description="S4 RNA-binding" evidence="1">
    <location>
        <begin position="352"/>
        <end position="418"/>
    </location>
</feature>
<feature type="short sequence motif" description="'HIGH' region">
    <location>
        <begin position="39"/>
        <end position="48"/>
    </location>
</feature>
<feature type="short sequence motif" description="'KMSKS' region">
    <location>
        <begin position="230"/>
        <end position="234"/>
    </location>
</feature>
<feature type="binding site" evidence="1">
    <location>
        <position position="34"/>
    </location>
    <ligand>
        <name>L-tyrosine</name>
        <dbReference type="ChEBI" id="CHEBI:58315"/>
    </ligand>
</feature>
<feature type="binding site" evidence="1">
    <location>
        <position position="169"/>
    </location>
    <ligand>
        <name>L-tyrosine</name>
        <dbReference type="ChEBI" id="CHEBI:58315"/>
    </ligand>
</feature>
<feature type="binding site" evidence="1">
    <location>
        <position position="173"/>
    </location>
    <ligand>
        <name>L-tyrosine</name>
        <dbReference type="ChEBI" id="CHEBI:58315"/>
    </ligand>
</feature>
<feature type="binding site" evidence="1">
    <location>
        <position position="233"/>
    </location>
    <ligand>
        <name>ATP</name>
        <dbReference type="ChEBI" id="CHEBI:30616"/>
    </ligand>
</feature>
<name>SYY1_BACCZ</name>
<comment type="function">
    <text evidence="1">Catalyzes the attachment of tyrosine to tRNA(Tyr) in a two-step reaction: tyrosine is first activated by ATP to form Tyr-AMP and then transferred to the acceptor end of tRNA(Tyr).</text>
</comment>
<comment type="catalytic activity">
    <reaction evidence="1">
        <text>tRNA(Tyr) + L-tyrosine + ATP = L-tyrosyl-tRNA(Tyr) + AMP + diphosphate + H(+)</text>
        <dbReference type="Rhea" id="RHEA:10220"/>
        <dbReference type="Rhea" id="RHEA-COMP:9706"/>
        <dbReference type="Rhea" id="RHEA-COMP:9707"/>
        <dbReference type="ChEBI" id="CHEBI:15378"/>
        <dbReference type="ChEBI" id="CHEBI:30616"/>
        <dbReference type="ChEBI" id="CHEBI:33019"/>
        <dbReference type="ChEBI" id="CHEBI:58315"/>
        <dbReference type="ChEBI" id="CHEBI:78442"/>
        <dbReference type="ChEBI" id="CHEBI:78536"/>
        <dbReference type="ChEBI" id="CHEBI:456215"/>
        <dbReference type="EC" id="6.1.1.1"/>
    </reaction>
</comment>
<comment type="subunit">
    <text evidence="1">Homodimer.</text>
</comment>
<comment type="subcellular location">
    <subcellularLocation>
        <location evidence="1">Cytoplasm</location>
    </subcellularLocation>
</comment>
<comment type="similarity">
    <text evidence="1">Belongs to the class-I aminoacyl-tRNA synthetase family. TyrS type 1 subfamily.</text>
</comment>
<gene>
    <name evidence="1" type="primary">tyrS1</name>
    <name type="ordered locus">BCE33L4407</name>
</gene>
<reference key="1">
    <citation type="journal article" date="2006" name="J. Bacteriol.">
        <title>Pathogenomic sequence analysis of Bacillus cereus and Bacillus thuringiensis isolates closely related to Bacillus anthracis.</title>
        <authorList>
            <person name="Han C.S."/>
            <person name="Xie G."/>
            <person name="Challacombe J.F."/>
            <person name="Altherr M.R."/>
            <person name="Bhotika S.S."/>
            <person name="Bruce D."/>
            <person name="Campbell C.S."/>
            <person name="Campbell M.L."/>
            <person name="Chen J."/>
            <person name="Chertkov O."/>
            <person name="Cleland C."/>
            <person name="Dimitrijevic M."/>
            <person name="Doggett N.A."/>
            <person name="Fawcett J.J."/>
            <person name="Glavina T."/>
            <person name="Goodwin L.A."/>
            <person name="Hill K.K."/>
            <person name="Hitchcock P."/>
            <person name="Jackson P.J."/>
            <person name="Keim P."/>
            <person name="Kewalramani A.R."/>
            <person name="Longmire J."/>
            <person name="Lucas S."/>
            <person name="Malfatti S."/>
            <person name="McMurry K."/>
            <person name="Meincke L.J."/>
            <person name="Misra M."/>
            <person name="Moseman B.L."/>
            <person name="Mundt M."/>
            <person name="Munk A.C."/>
            <person name="Okinaka R.T."/>
            <person name="Parson-Quintana B."/>
            <person name="Reilly L.P."/>
            <person name="Richardson P."/>
            <person name="Robinson D.L."/>
            <person name="Rubin E."/>
            <person name="Saunders E."/>
            <person name="Tapia R."/>
            <person name="Tesmer J.G."/>
            <person name="Thayer N."/>
            <person name="Thompson L.S."/>
            <person name="Tice H."/>
            <person name="Ticknor L.O."/>
            <person name="Wills P.L."/>
            <person name="Brettin T.S."/>
            <person name="Gilna P."/>
        </authorList>
    </citation>
    <scope>NUCLEOTIDE SEQUENCE [LARGE SCALE GENOMIC DNA]</scope>
    <source>
        <strain>ZK / E33L</strain>
    </source>
</reference>